<proteinExistence type="evidence at protein level"/>
<evidence type="ECO:0000255" key="1">
    <source>
        <dbReference type="HAMAP-Rule" id="MF_01393"/>
    </source>
</evidence>
<evidence type="ECO:0000269" key="2">
    <source>
    </source>
</evidence>
<evidence type="ECO:0000305" key="3"/>
<feature type="chain" id="PRO_0000362350" description="ATP synthase subunit a">
    <location>
        <begin position="1"/>
        <end position="218"/>
    </location>
</feature>
<feature type="transmembrane region" description="Helical" evidence="1">
    <location>
        <begin position="17"/>
        <end position="37"/>
    </location>
</feature>
<feature type="transmembrane region" description="Helical" evidence="1">
    <location>
        <begin position="75"/>
        <end position="95"/>
    </location>
</feature>
<feature type="transmembrane region" description="Helical" evidence="1">
    <location>
        <begin position="104"/>
        <end position="124"/>
    </location>
</feature>
<feature type="transmembrane region" description="Helical" evidence="1">
    <location>
        <begin position="162"/>
        <end position="184"/>
    </location>
</feature>
<feature type="transmembrane region" description="Helical" evidence="1">
    <location>
        <begin position="196"/>
        <end position="216"/>
    </location>
</feature>
<gene>
    <name evidence="1" type="primary">atpB</name>
    <name type="ordered locus">Moth_2384</name>
</gene>
<keyword id="KW-0066">ATP synthesis</keyword>
<keyword id="KW-1003">Cell membrane</keyword>
<keyword id="KW-0138">CF(0)</keyword>
<keyword id="KW-0375">Hydrogen ion transport</keyword>
<keyword id="KW-0406">Ion transport</keyword>
<keyword id="KW-0472">Membrane</keyword>
<keyword id="KW-0812">Transmembrane</keyword>
<keyword id="KW-1133">Transmembrane helix</keyword>
<keyword id="KW-0813">Transport</keyword>
<name>ATP6_MOOTA</name>
<organism>
    <name type="scientific">Moorella thermoacetica (strain ATCC 39073 / JCM 9320)</name>
    <dbReference type="NCBI Taxonomy" id="264732"/>
    <lineage>
        <taxon>Bacteria</taxon>
        <taxon>Bacillati</taxon>
        <taxon>Bacillota</taxon>
        <taxon>Clostridia</taxon>
        <taxon>Moorellales</taxon>
        <taxon>Moorellaceae</taxon>
        <taxon>Moorella</taxon>
    </lineage>
</organism>
<protein>
    <recommendedName>
        <fullName evidence="1">ATP synthase subunit a</fullName>
    </recommendedName>
    <alternativeName>
        <fullName evidence="1">ATP synthase F0 sector subunit a</fullName>
    </alternativeName>
    <alternativeName>
        <fullName evidence="1">F-ATPase subunit 6</fullName>
    </alternativeName>
</protein>
<accession>Q2RFX3</accession>
<accession>O05428</accession>
<reference key="1">
    <citation type="journal article" date="1997" name="J. Bacteriol.">
        <title>Composition and primary structure of the F1F0 ATP synthase from the obligately anaerobic bacterium Clostridium thermoaceticum.</title>
        <authorList>
            <person name="Das A."/>
            <person name="Ljungdahl L.G."/>
        </authorList>
    </citation>
    <scope>NUCLEOTIDE SEQUENCE [GENOMIC DNA]</scope>
    <scope>SUBUNIT</scope>
    <scope>TRANSCRIPT</scope>
    <scope>OPERON STRUCTURE</scope>
</reference>
<reference key="2">
    <citation type="journal article" date="2008" name="Environ. Microbiol.">
        <title>The complete genome sequence of Moorella thermoacetica (f. Clostridium thermoaceticum).</title>
        <authorList>
            <person name="Pierce E."/>
            <person name="Xie G."/>
            <person name="Barabote R.D."/>
            <person name="Saunders E."/>
            <person name="Han C.S."/>
            <person name="Detter J.C."/>
            <person name="Richardson P."/>
            <person name="Brettin T.S."/>
            <person name="Das A."/>
            <person name="Ljungdahl L.G."/>
            <person name="Ragsdale S.W."/>
        </authorList>
    </citation>
    <scope>NUCLEOTIDE SEQUENCE [LARGE SCALE GENOMIC DNA]</scope>
    <source>
        <strain>ATCC 39073 / JCM 9320</strain>
    </source>
</reference>
<dbReference type="EMBL" id="U64318">
    <property type="protein sequence ID" value="AAB51460.1"/>
    <property type="status" value="ALT_INIT"/>
    <property type="molecule type" value="Genomic_DNA"/>
</dbReference>
<dbReference type="EMBL" id="CP000232">
    <property type="protein sequence ID" value="ABC20666.1"/>
    <property type="molecule type" value="Genomic_DNA"/>
</dbReference>
<dbReference type="RefSeq" id="YP_431209.1">
    <property type="nucleotide sequence ID" value="NC_007644.1"/>
</dbReference>
<dbReference type="SMR" id="Q2RFX3"/>
<dbReference type="STRING" id="264732.Moth_2384"/>
<dbReference type="EnsemblBacteria" id="ABC20666">
    <property type="protein sequence ID" value="ABC20666"/>
    <property type="gene ID" value="Moth_2384"/>
</dbReference>
<dbReference type="KEGG" id="mta:Moth_2384"/>
<dbReference type="PATRIC" id="fig|264732.11.peg.2597"/>
<dbReference type="eggNOG" id="COG0356">
    <property type="taxonomic scope" value="Bacteria"/>
</dbReference>
<dbReference type="HOGENOM" id="CLU_041018_2_2_9"/>
<dbReference type="OrthoDB" id="9789241at2"/>
<dbReference type="GO" id="GO:0005886">
    <property type="term" value="C:plasma membrane"/>
    <property type="evidence" value="ECO:0007669"/>
    <property type="project" value="UniProtKB-SubCell"/>
</dbReference>
<dbReference type="GO" id="GO:0045259">
    <property type="term" value="C:proton-transporting ATP synthase complex"/>
    <property type="evidence" value="ECO:0007669"/>
    <property type="project" value="UniProtKB-KW"/>
</dbReference>
<dbReference type="GO" id="GO:0046933">
    <property type="term" value="F:proton-transporting ATP synthase activity, rotational mechanism"/>
    <property type="evidence" value="ECO:0007669"/>
    <property type="project" value="UniProtKB-UniRule"/>
</dbReference>
<dbReference type="GO" id="GO:0042777">
    <property type="term" value="P:proton motive force-driven plasma membrane ATP synthesis"/>
    <property type="evidence" value="ECO:0007669"/>
    <property type="project" value="TreeGrafter"/>
</dbReference>
<dbReference type="CDD" id="cd00310">
    <property type="entry name" value="ATP-synt_Fo_a_6"/>
    <property type="match status" value="1"/>
</dbReference>
<dbReference type="Gene3D" id="1.20.120.220">
    <property type="entry name" value="ATP synthase, F0 complex, subunit A"/>
    <property type="match status" value="1"/>
</dbReference>
<dbReference type="HAMAP" id="MF_01393">
    <property type="entry name" value="ATP_synth_a_bact"/>
    <property type="match status" value="1"/>
</dbReference>
<dbReference type="InterPro" id="IPR045082">
    <property type="entry name" value="ATP_syn_F0_a_bact/chloroplast"/>
</dbReference>
<dbReference type="InterPro" id="IPR000568">
    <property type="entry name" value="ATP_synth_F0_asu"/>
</dbReference>
<dbReference type="InterPro" id="IPR023011">
    <property type="entry name" value="ATP_synth_F0_asu_AS"/>
</dbReference>
<dbReference type="InterPro" id="IPR035908">
    <property type="entry name" value="F0_ATP_A_sf"/>
</dbReference>
<dbReference type="NCBIfam" id="TIGR01131">
    <property type="entry name" value="ATP_synt_6_or_A"/>
    <property type="match status" value="1"/>
</dbReference>
<dbReference type="PANTHER" id="PTHR42823">
    <property type="entry name" value="ATP SYNTHASE SUBUNIT A, CHLOROPLASTIC"/>
    <property type="match status" value="1"/>
</dbReference>
<dbReference type="PANTHER" id="PTHR42823:SF3">
    <property type="entry name" value="ATP SYNTHASE SUBUNIT A, CHLOROPLASTIC"/>
    <property type="match status" value="1"/>
</dbReference>
<dbReference type="Pfam" id="PF00119">
    <property type="entry name" value="ATP-synt_A"/>
    <property type="match status" value="1"/>
</dbReference>
<dbReference type="PRINTS" id="PR00123">
    <property type="entry name" value="ATPASEA"/>
</dbReference>
<dbReference type="SUPFAM" id="SSF81336">
    <property type="entry name" value="F1F0 ATP synthase subunit A"/>
    <property type="match status" value="1"/>
</dbReference>
<dbReference type="PROSITE" id="PS00449">
    <property type="entry name" value="ATPASE_A"/>
    <property type="match status" value="1"/>
</dbReference>
<comment type="function">
    <text evidence="1">Key component of the proton channel; it plays a direct role in the translocation of protons across the membrane.</text>
</comment>
<comment type="subunit">
    <text evidence="1 2">F-type ATPases have 2 components, CF(1) - the catalytic core - and CF(0) - the membrane proton channel. CF(1) has five subunits: alpha(3), beta(3), gamma(1), delta(1), epsilon(1). CF(0) has three main subunits: a(1), b(2) and c(9-12). The alpha and beta chains form an alternating ring which encloses part of the gamma chain. CF(1) is attached to CF(0) by a central stalk formed by the gamma and epsilon chains, while a peripheral stalk is formed by the delta and b chains (By similarity). In this bacterium the a and b subunits are transcribed but do not seem to be translated, thus the ATP synthase consists of the alpha, beta, gamma, delta, epsilon and c subunits.</text>
</comment>
<comment type="subcellular location">
    <subcellularLocation>
        <location evidence="3">Cell membrane</location>
        <topology evidence="3">Multi-pass membrane protein</topology>
    </subcellularLocation>
</comment>
<comment type="similarity">
    <text evidence="1">Belongs to the ATPase A chain family.</text>
</comment>
<comment type="sequence caution" evidence="3">
    <conflict type="erroneous initiation">
        <sequence resource="EMBL-CDS" id="AAB51460"/>
    </conflict>
</comment>
<sequence>MTHVRPVEIFHLGPIPIYSTVVNTWIIMILLLAGIFLATRKLSFIPRGAQHVLEMFLEFFYGLLEEIIGKEGRRYLPLVATLFIFILSLNLSWFIPGMKPPTMDLSTTAAFAVTTIILVQIFGIRKLGLRGYIRHFFQPAPFLFPLNVIEELVKPVSLSLRLFGNLFGEEMVVTILFLMIPFLLPTPIMLLGVLMGTIQAFVFTLLTITYIANFVHGH</sequence>